<accession>Q9K6Z7</accession>
<keyword id="KW-0028">Amino-acid biosynthesis</keyword>
<keyword id="KW-0067">ATP-binding</keyword>
<keyword id="KW-0963">Cytoplasm</keyword>
<keyword id="KW-0368">Histidine biosynthesis</keyword>
<keyword id="KW-0378">Hydrolase</keyword>
<keyword id="KW-0511">Multifunctional enzyme</keyword>
<keyword id="KW-0547">Nucleotide-binding</keyword>
<keyword id="KW-1185">Reference proteome</keyword>
<proteinExistence type="inferred from homology"/>
<reference key="1">
    <citation type="journal article" date="2000" name="Nucleic Acids Res.">
        <title>Complete genome sequence of the alkaliphilic bacterium Bacillus halodurans and genomic sequence comparison with Bacillus subtilis.</title>
        <authorList>
            <person name="Takami H."/>
            <person name="Nakasone K."/>
            <person name="Takaki Y."/>
            <person name="Maeno G."/>
            <person name="Sasaki R."/>
            <person name="Masui N."/>
            <person name="Fuji F."/>
            <person name="Hirama C."/>
            <person name="Nakamura Y."/>
            <person name="Ogasawara N."/>
            <person name="Kuhara S."/>
            <person name="Horikoshi K."/>
        </authorList>
    </citation>
    <scope>NUCLEOTIDE SEQUENCE [LARGE SCALE GENOMIC DNA]</scope>
    <source>
        <strain>ATCC BAA-125 / DSM 18197 / FERM 7344 / JCM 9153 / C-125</strain>
    </source>
</reference>
<dbReference type="EC" id="3.5.4.19"/>
<dbReference type="EC" id="3.6.1.31"/>
<dbReference type="EMBL" id="BA000004">
    <property type="protein sequence ID" value="BAB07296.1"/>
    <property type="molecule type" value="Genomic_DNA"/>
</dbReference>
<dbReference type="PIR" id="A84097">
    <property type="entry name" value="A84097"/>
</dbReference>
<dbReference type="RefSeq" id="WP_010899705.1">
    <property type="nucleotide sequence ID" value="NC_002570.2"/>
</dbReference>
<dbReference type="SMR" id="Q9K6Z7"/>
<dbReference type="STRING" id="272558.gene:10729490"/>
<dbReference type="KEGG" id="bha:BH3577"/>
<dbReference type="eggNOG" id="COG0139">
    <property type="taxonomic scope" value="Bacteria"/>
</dbReference>
<dbReference type="eggNOG" id="COG0140">
    <property type="taxonomic scope" value="Bacteria"/>
</dbReference>
<dbReference type="HOGENOM" id="CLU_048577_3_1_9"/>
<dbReference type="OrthoDB" id="9795769at2"/>
<dbReference type="UniPathway" id="UPA00031">
    <property type="reaction ID" value="UER00007"/>
</dbReference>
<dbReference type="UniPathway" id="UPA00031">
    <property type="reaction ID" value="UER00008"/>
</dbReference>
<dbReference type="Proteomes" id="UP000001258">
    <property type="component" value="Chromosome"/>
</dbReference>
<dbReference type="GO" id="GO:0005737">
    <property type="term" value="C:cytoplasm"/>
    <property type="evidence" value="ECO:0007669"/>
    <property type="project" value="UniProtKB-SubCell"/>
</dbReference>
<dbReference type="GO" id="GO:0005524">
    <property type="term" value="F:ATP binding"/>
    <property type="evidence" value="ECO:0007669"/>
    <property type="project" value="UniProtKB-KW"/>
</dbReference>
<dbReference type="GO" id="GO:0004635">
    <property type="term" value="F:phosphoribosyl-AMP cyclohydrolase activity"/>
    <property type="evidence" value="ECO:0007669"/>
    <property type="project" value="UniProtKB-UniRule"/>
</dbReference>
<dbReference type="GO" id="GO:0004636">
    <property type="term" value="F:phosphoribosyl-ATP diphosphatase activity"/>
    <property type="evidence" value="ECO:0007669"/>
    <property type="project" value="UniProtKB-UniRule"/>
</dbReference>
<dbReference type="GO" id="GO:0000105">
    <property type="term" value="P:L-histidine biosynthetic process"/>
    <property type="evidence" value="ECO:0007669"/>
    <property type="project" value="UniProtKB-UniRule"/>
</dbReference>
<dbReference type="CDD" id="cd11534">
    <property type="entry name" value="NTP-PPase_HisIE_like"/>
    <property type="match status" value="1"/>
</dbReference>
<dbReference type="FunFam" id="1.10.287.1080:FF:000002">
    <property type="entry name" value="Histidine biosynthesis bifunctional protein HisIE"/>
    <property type="match status" value="1"/>
</dbReference>
<dbReference type="FunFam" id="3.10.20.810:FF:000001">
    <property type="entry name" value="Histidine biosynthesis bifunctional protein HisIE"/>
    <property type="match status" value="1"/>
</dbReference>
<dbReference type="Gene3D" id="1.10.287.1080">
    <property type="entry name" value="MazG-like"/>
    <property type="match status" value="1"/>
</dbReference>
<dbReference type="Gene3D" id="3.10.20.810">
    <property type="entry name" value="Phosphoribosyl-AMP cyclohydrolase"/>
    <property type="match status" value="1"/>
</dbReference>
<dbReference type="HAMAP" id="MF_01020">
    <property type="entry name" value="HisE"/>
    <property type="match status" value="1"/>
</dbReference>
<dbReference type="HAMAP" id="MF_01021">
    <property type="entry name" value="HisI"/>
    <property type="match status" value="1"/>
</dbReference>
<dbReference type="HAMAP" id="MF_01019">
    <property type="entry name" value="HisIE"/>
    <property type="match status" value="1"/>
</dbReference>
<dbReference type="InterPro" id="IPR023019">
    <property type="entry name" value="His_synth_HisIE"/>
</dbReference>
<dbReference type="InterPro" id="IPR008179">
    <property type="entry name" value="HisE"/>
</dbReference>
<dbReference type="InterPro" id="IPR026660">
    <property type="entry name" value="PRA-CH"/>
</dbReference>
<dbReference type="InterPro" id="IPR021130">
    <property type="entry name" value="PRib-ATP_PPHydrolase-like"/>
</dbReference>
<dbReference type="InterPro" id="IPR002496">
    <property type="entry name" value="PRib_AMP_CycHydrolase_dom"/>
</dbReference>
<dbReference type="InterPro" id="IPR038019">
    <property type="entry name" value="PRib_AMP_CycHydrolase_sf"/>
</dbReference>
<dbReference type="NCBIfam" id="TIGR03188">
    <property type="entry name" value="histidine_hisI"/>
    <property type="match status" value="1"/>
</dbReference>
<dbReference type="NCBIfam" id="NF000768">
    <property type="entry name" value="PRK00051.1"/>
    <property type="match status" value="1"/>
</dbReference>
<dbReference type="NCBIfam" id="NF002747">
    <property type="entry name" value="PRK02759.1"/>
    <property type="match status" value="1"/>
</dbReference>
<dbReference type="PANTHER" id="PTHR42945">
    <property type="entry name" value="HISTIDINE BIOSYNTHESIS BIFUNCTIONAL PROTEIN"/>
    <property type="match status" value="1"/>
</dbReference>
<dbReference type="PANTHER" id="PTHR42945:SF9">
    <property type="entry name" value="HISTIDINE BIOSYNTHESIS BIFUNCTIONAL PROTEIN HISIE"/>
    <property type="match status" value="1"/>
</dbReference>
<dbReference type="Pfam" id="PF01502">
    <property type="entry name" value="PRA-CH"/>
    <property type="match status" value="1"/>
</dbReference>
<dbReference type="Pfam" id="PF01503">
    <property type="entry name" value="PRA-PH"/>
    <property type="match status" value="1"/>
</dbReference>
<dbReference type="SUPFAM" id="SSF101386">
    <property type="entry name" value="all-alpha NTP pyrophosphatases"/>
    <property type="match status" value="1"/>
</dbReference>
<dbReference type="SUPFAM" id="SSF141734">
    <property type="entry name" value="HisI-like"/>
    <property type="match status" value="1"/>
</dbReference>
<sequence length="211" mass="23906">MNVDDLTFDDKGLIPAVVQDAQSKEVVTVAYMNRESFEKTVETGETWFYSRSRQELWHKGATSGHTQKVVDIRYDCDGDALVVLVELKGPACHTGKYSCFFESVFGKKIYGASDRFGIIATLEALIAEREAEMPEGAYTTYLFEKGVDKILKKVGEEATEVVIAAKNRDAEELKWEVADLLYHLLVLLREQKLPVDEVLAVLEERHRPKEE</sequence>
<protein>
    <recommendedName>
        <fullName>Histidine biosynthesis bifunctional protein HisIE</fullName>
    </recommendedName>
    <domain>
        <recommendedName>
            <fullName>Phosphoribosyl-AMP cyclohydrolase</fullName>
            <shortName>PRA-CH</shortName>
            <ecNumber>3.5.4.19</ecNumber>
        </recommendedName>
    </domain>
    <domain>
        <recommendedName>
            <fullName>Phosphoribosyl-ATP pyrophosphatase</fullName>
            <shortName>PRA-PH</shortName>
            <ecNumber>3.6.1.31</ecNumber>
        </recommendedName>
    </domain>
</protein>
<name>HIS2_HALH5</name>
<organism>
    <name type="scientific">Halalkalibacterium halodurans (strain ATCC BAA-125 / DSM 18197 / FERM 7344 / JCM 9153 / C-125)</name>
    <name type="common">Bacillus halodurans</name>
    <dbReference type="NCBI Taxonomy" id="272558"/>
    <lineage>
        <taxon>Bacteria</taxon>
        <taxon>Bacillati</taxon>
        <taxon>Bacillota</taxon>
        <taxon>Bacilli</taxon>
        <taxon>Bacillales</taxon>
        <taxon>Bacillaceae</taxon>
        <taxon>Halalkalibacterium (ex Joshi et al. 2022)</taxon>
    </lineage>
</organism>
<gene>
    <name type="primary">hisI</name>
    <name type="synonym">hisIE</name>
    <name type="ordered locus">BH3577</name>
</gene>
<evidence type="ECO:0000250" key="1"/>
<evidence type="ECO:0000305" key="2"/>
<comment type="catalytic activity">
    <reaction>
        <text>1-(5-phospho-beta-D-ribosyl)-ATP + H2O = 1-(5-phospho-beta-D-ribosyl)-5'-AMP + diphosphate + H(+)</text>
        <dbReference type="Rhea" id="RHEA:22828"/>
        <dbReference type="ChEBI" id="CHEBI:15377"/>
        <dbReference type="ChEBI" id="CHEBI:15378"/>
        <dbReference type="ChEBI" id="CHEBI:33019"/>
        <dbReference type="ChEBI" id="CHEBI:59457"/>
        <dbReference type="ChEBI" id="CHEBI:73183"/>
        <dbReference type="EC" id="3.6.1.31"/>
    </reaction>
</comment>
<comment type="catalytic activity">
    <reaction>
        <text>1-(5-phospho-beta-D-ribosyl)-5'-AMP + H2O = 1-(5-phospho-beta-D-ribosyl)-5-[(5-phospho-beta-D-ribosylamino)methylideneamino]imidazole-4-carboxamide</text>
        <dbReference type="Rhea" id="RHEA:20049"/>
        <dbReference type="ChEBI" id="CHEBI:15377"/>
        <dbReference type="ChEBI" id="CHEBI:58435"/>
        <dbReference type="ChEBI" id="CHEBI:59457"/>
        <dbReference type="EC" id="3.5.4.19"/>
    </reaction>
</comment>
<comment type="pathway">
    <text>Amino-acid biosynthesis; L-histidine biosynthesis; L-histidine from 5-phospho-alpha-D-ribose 1-diphosphate: step 2/9.</text>
</comment>
<comment type="pathway">
    <text>Amino-acid biosynthesis; L-histidine biosynthesis; L-histidine from 5-phospho-alpha-D-ribose 1-diphosphate: step 3/9.</text>
</comment>
<comment type="subcellular location">
    <subcellularLocation>
        <location evidence="1">Cytoplasm</location>
    </subcellularLocation>
</comment>
<comment type="similarity">
    <text evidence="2">In the N-terminal section; belongs to the PRA-CH family.</text>
</comment>
<comment type="similarity">
    <text evidence="2">In the C-terminal section; belongs to the PRA-PH family.</text>
</comment>
<feature type="chain" id="PRO_0000136402" description="Histidine biosynthesis bifunctional protein HisIE">
    <location>
        <begin position="1"/>
        <end position="211"/>
    </location>
</feature>
<feature type="region of interest" description="Phosphoribosyl-AMP cyclohydrolase">
    <location>
        <begin position="1"/>
        <end position="118"/>
    </location>
</feature>
<feature type="region of interest" description="Phosphoribosyl-ATP pyrophosphohydrolase">
    <location>
        <begin position="119"/>
        <end position="211"/>
    </location>
</feature>